<reference key="1">
    <citation type="journal article" date="2008" name="PLoS ONE">
        <title>Genome sequence of the saprophyte Leptospira biflexa provides insights into the evolution of Leptospira and the pathogenesis of leptospirosis.</title>
        <authorList>
            <person name="Picardeau M."/>
            <person name="Bulach D.M."/>
            <person name="Bouchier C."/>
            <person name="Zuerner R.L."/>
            <person name="Zidane N."/>
            <person name="Wilson P.J."/>
            <person name="Creno S."/>
            <person name="Kuczek E.S."/>
            <person name="Bommezzadri S."/>
            <person name="Davis J.C."/>
            <person name="McGrath A."/>
            <person name="Johnson M.J."/>
            <person name="Boursaux-Eude C."/>
            <person name="Seemann T."/>
            <person name="Rouy Z."/>
            <person name="Coppel R.L."/>
            <person name="Rood J.I."/>
            <person name="Lajus A."/>
            <person name="Davies J.K."/>
            <person name="Medigue C."/>
            <person name="Adler B."/>
        </authorList>
    </citation>
    <scope>NUCLEOTIDE SEQUENCE [LARGE SCALE GENOMIC DNA]</scope>
    <source>
        <strain>Patoc 1 / ATCC 23582 / Paris</strain>
    </source>
</reference>
<name>HIS4_LEPBP</name>
<feature type="chain" id="PRO_1000135128" description="1-(5-phosphoribosyl)-5-[(5-phosphoribosylamino)methylideneamino] imidazole-4-carboxamide isomerase">
    <location>
        <begin position="1"/>
        <end position="247"/>
    </location>
</feature>
<feature type="active site" description="Proton acceptor" evidence="1">
    <location>
        <position position="8"/>
    </location>
</feature>
<feature type="active site" description="Proton donor" evidence="1">
    <location>
        <position position="130"/>
    </location>
</feature>
<accession>B0SLU9</accession>
<comment type="catalytic activity">
    <reaction evidence="1">
        <text>1-(5-phospho-beta-D-ribosyl)-5-[(5-phospho-beta-D-ribosylamino)methylideneamino]imidazole-4-carboxamide = 5-[(5-phospho-1-deoxy-D-ribulos-1-ylimino)methylamino]-1-(5-phospho-beta-D-ribosyl)imidazole-4-carboxamide</text>
        <dbReference type="Rhea" id="RHEA:15469"/>
        <dbReference type="ChEBI" id="CHEBI:58435"/>
        <dbReference type="ChEBI" id="CHEBI:58525"/>
        <dbReference type="EC" id="5.3.1.16"/>
    </reaction>
</comment>
<comment type="pathway">
    <text evidence="1">Amino-acid biosynthesis; L-histidine biosynthesis; L-histidine from 5-phospho-alpha-D-ribose 1-diphosphate: step 4/9.</text>
</comment>
<comment type="subcellular location">
    <subcellularLocation>
        <location evidence="1">Cytoplasm</location>
    </subcellularLocation>
</comment>
<comment type="similarity">
    <text evidence="1">Belongs to the HisA/HisF family.</text>
</comment>
<dbReference type="EC" id="5.3.1.16" evidence="1"/>
<dbReference type="EMBL" id="CP000786">
    <property type="protein sequence ID" value="ABZ97001.1"/>
    <property type="molecule type" value="Genomic_DNA"/>
</dbReference>
<dbReference type="RefSeq" id="WP_012387885.1">
    <property type="nucleotide sequence ID" value="NC_010602.1"/>
</dbReference>
<dbReference type="SMR" id="B0SLU9"/>
<dbReference type="STRING" id="456481.LEPBI_I0876"/>
<dbReference type="KEGG" id="lbi:LEPBI_I0876"/>
<dbReference type="HOGENOM" id="CLU_048577_1_2_12"/>
<dbReference type="OrthoDB" id="9781903at2"/>
<dbReference type="BioCyc" id="LBIF456481:LEPBI_RS04290-MONOMER"/>
<dbReference type="UniPathway" id="UPA00031">
    <property type="reaction ID" value="UER00009"/>
</dbReference>
<dbReference type="Proteomes" id="UP000001847">
    <property type="component" value="Chromosome I"/>
</dbReference>
<dbReference type="GO" id="GO:0005737">
    <property type="term" value="C:cytoplasm"/>
    <property type="evidence" value="ECO:0007669"/>
    <property type="project" value="UniProtKB-SubCell"/>
</dbReference>
<dbReference type="GO" id="GO:0003949">
    <property type="term" value="F:1-(5-phosphoribosyl)-5-[(5-phosphoribosylamino)methylideneamino]imidazole-4-carboxamide isomerase activity"/>
    <property type="evidence" value="ECO:0007669"/>
    <property type="project" value="UniProtKB-UniRule"/>
</dbReference>
<dbReference type="GO" id="GO:0000105">
    <property type="term" value="P:L-histidine biosynthetic process"/>
    <property type="evidence" value="ECO:0007669"/>
    <property type="project" value="UniProtKB-UniRule"/>
</dbReference>
<dbReference type="GO" id="GO:0000162">
    <property type="term" value="P:L-tryptophan biosynthetic process"/>
    <property type="evidence" value="ECO:0007669"/>
    <property type="project" value="TreeGrafter"/>
</dbReference>
<dbReference type="CDD" id="cd04732">
    <property type="entry name" value="HisA"/>
    <property type="match status" value="1"/>
</dbReference>
<dbReference type="FunFam" id="3.20.20.70:FF:000009">
    <property type="entry name" value="1-(5-phosphoribosyl)-5-[(5-phosphoribosylamino)methylideneamino] imidazole-4-carboxamide isomerase"/>
    <property type="match status" value="1"/>
</dbReference>
<dbReference type="Gene3D" id="3.20.20.70">
    <property type="entry name" value="Aldolase class I"/>
    <property type="match status" value="1"/>
</dbReference>
<dbReference type="HAMAP" id="MF_01014">
    <property type="entry name" value="HisA"/>
    <property type="match status" value="1"/>
</dbReference>
<dbReference type="InterPro" id="IPR013785">
    <property type="entry name" value="Aldolase_TIM"/>
</dbReference>
<dbReference type="InterPro" id="IPR006062">
    <property type="entry name" value="His_biosynth"/>
</dbReference>
<dbReference type="InterPro" id="IPR006063">
    <property type="entry name" value="HisA_bact_arch"/>
</dbReference>
<dbReference type="InterPro" id="IPR044524">
    <property type="entry name" value="Isoase_HisA-like"/>
</dbReference>
<dbReference type="InterPro" id="IPR023016">
    <property type="entry name" value="Isoase_HisA-like_bact"/>
</dbReference>
<dbReference type="InterPro" id="IPR011060">
    <property type="entry name" value="RibuloseP-bd_barrel"/>
</dbReference>
<dbReference type="NCBIfam" id="TIGR00007">
    <property type="entry name" value="1-(5-phosphoribosyl)-5-[(5-phosphoribosylamino)methylideneamino]imidazole-4-carboxamide isomerase"/>
    <property type="match status" value="1"/>
</dbReference>
<dbReference type="PANTHER" id="PTHR43090">
    <property type="entry name" value="1-(5-PHOSPHORIBOSYL)-5-[(5-PHOSPHORIBOSYLAMINO)METHYLIDENEAMINO] IMIDAZOLE-4-CARBOXAMIDE ISOMERASE"/>
    <property type="match status" value="1"/>
</dbReference>
<dbReference type="PANTHER" id="PTHR43090:SF2">
    <property type="entry name" value="1-(5-PHOSPHORIBOSYL)-5-[(5-PHOSPHORIBOSYLAMINO)METHYLIDENEAMINO] IMIDAZOLE-4-CARBOXAMIDE ISOMERASE"/>
    <property type="match status" value="1"/>
</dbReference>
<dbReference type="Pfam" id="PF00977">
    <property type="entry name" value="His_biosynth"/>
    <property type="match status" value="1"/>
</dbReference>
<dbReference type="SUPFAM" id="SSF51366">
    <property type="entry name" value="Ribulose-phoshate binding barrel"/>
    <property type="match status" value="1"/>
</dbReference>
<gene>
    <name evidence="1" type="primary">hisA</name>
    <name type="ordered locus">LEPBI_I0876</name>
</gene>
<sequence length="247" mass="27273">MLVLPAIDLLDNEAVRLLQGDYSKKTVYSSSPEKMIQVFEEQGATLIHIVDLNAAKTGKSENEKTIKKIKEKCTVDLELGGGIRTIDNMKFYDGLGVSRLILGTVAVEEPNVVEKAVSLFGQDRIVIGVDAKNGYVRTKGWESNSGILYKDFLTTMYGMGIRHVIFTDIARDGMMEGPNTLAYAELLETFPDLQLVASGGVSSKEDLVELYDKTNGKLFGAITGKAIYEGKLDLKESIRILNQKREK</sequence>
<protein>
    <recommendedName>
        <fullName evidence="1">1-(5-phosphoribosyl)-5-[(5-phosphoribosylamino)methylideneamino] imidazole-4-carboxamide isomerase</fullName>
        <ecNumber evidence="1">5.3.1.16</ecNumber>
    </recommendedName>
    <alternativeName>
        <fullName evidence="1">Phosphoribosylformimino-5-aminoimidazole carboxamide ribotide isomerase</fullName>
    </alternativeName>
</protein>
<keyword id="KW-0028">Amino-acid biosynthesis</keyword>
<keyword id="KW-0963">Cytoplasm</keyword>
<keyword id="KW-0368">Histidine biosynthesis</keyword>
<keyword id="KW-0413">Isomerase</keyword>
<keyword id="KW-1185">Reference proteome</keyword>
<evidence type="ECO:0000255" key="1">
    <source>
        <dbReference type="HAMAP-Rule" id="MF_01014"/>
    </source>
</evidence>
<organism>
    <name type="scientific">Leptospira biflexa serovar Patoc (strain Patoc 1 / ATCC 23582 / Paris)</name>
    <dbReference type="NCBI Taxonomy" id="456481"/>
    <lineage>
        <taxon>Bacteria</taxon>
        <taxon>Pseudomonadati</taxon>
        <taxon>Spirochaetota</taxon>
        <taxon>Spirochaetia</taxon>
        <taxon>Leptospirales</taxon>
        <taxon>Leptospiraceae</taxon>
        <taxon>Leptospira</taxon>
    </lineage>
</organism>
<proteinExistence type="inferred from homology"/>